<name>MTG8R_MOUSE</name>
<protein>
    <recommendedName>
        <fullName>Protein CBFA2T2</fullName>
    </recommendedName>
    <alternativeName>
        <fullName>MTG8-like protein</fullName>
    </alternativeName>
    <alternativeName>
        <fullName>MTG8-related protein 1</fullName>
    </alternativeName>
</protein>
<feature type="chain" id="PRO_0000218302" description="Protein CBFA2T2">
    <location>
        <begin position="1"/>
        <end position="594"/>
    </location>
</feature>
<feature type="domain" description="TAFH" evidence="5">
    <location>
        <begin position="104"/>
        <end position="199"/>
    </location>
</feature>
<feature type="zinc finger region" description="MYND-type" evidence="4">
    <location>
        <begin position="498"/>
        <end position="534"/>
    </location>
</feature>
<feature type="region of interest" description="Disordered" evidence="6">
    <location>
        <begin position="48"/>
        <end position="96"/>
    </location>
</feature>
<feature type="region of interest" description="Interaction with PRDM14" evidence="13 14">
    <location>
        <begin position="98"/>
        <end position="206"/>
    </location>
</feature>
<feature type="region of interest" description="Disordered" evidence="6">
    <location>
        <begin position="220"/>
        <end position="257"/>
    </location>
</feature>
<feature type="region of interest" description="Nervy homology region 2 (NHR2)" evidence="1">
    <location>
        <begin position="322"/>
        <end position="368"/>
    </location>
</feature>
<feature type="region of interest" description="Disordered" evidence="6">
    <location>
        <begin position="388"/>
        <end position="416"/>
    </location>
</feature>
<feature type="region of interest" description="Nervy homology region 3 (NHR3)" evidence="1">
    <location>
        <begin position="426"/>
        <end position="475"/>
    </location>
</feature>
<feature type="region of interest" description="Disordered" evidence="6">
    <location>
        <begin position="538"/>
        <end position="594"/>
    </location>
</feature>
<feature type="coiled-coil region" evidence="3">
    <location>
        <begin position="442"/>
        <end position="482"/>
    </location>
</feature>
<feature type="compositionally biased region" description="Polar residues" evidence="6">
    <location>
        <begin position="55"/>
        <end position="70"/>
    </location>
</feature>
<feature type="compositionally biased region" description="Polar residues" evidence="6">
    <location>
        <begin position="79"/>
        <end position="96"/>
    </location>
</feature>
<feature type="compositionally biased region" description="Basic and acidic residues" evidence="6">
    <location>
        <begin position="227"/>
        <end position="242"/>
    </location>
</feature>
<feature type="compositionally biased region" description="Polar residues" evidence="6">
    <location>
        <begin position="393"/>
        <end position="410"/>
    </location>
</feature>
<feature type="compositionally biased region" description="Low complexity" evidence="6">
    <location>
        <begin position="573"/>
        <end position="588"/>
    </location>
</feature>
<feature type="binding site" evidence="4">
    <location>
        <position position="498"/>
    </location>
    <ligand>
        <name>Zn(2+)</name>
        <dbReference type="ChEBI" id="CHEBI:29105"/>
        <label>1</label>
    </ligand>
</feature>
<feature type="binding site" evidence="4">
    <location>
        <position position="501"/>
    </location>
    <ligand>
        <name>Zn(2+)</name>
        <dbReference type="ChEBI" id="CHEBI:29105"/>
        <label>1</label>
    </ligand>
</feature>
<feature type="binding site" evidence="4">
    <location>
        <position position="509"/>
    </location>
    <ligand>
        <name>Zn(2+)</name>
        <dbReference type="ChEBI" id="CHEBI:29105"/>
        <label>2</label>
    </ligand>
</feature>
<feature type="binding site" evidence="4">
    <location>
        <position position="512"/>
    </location>
    <ligand>
        <name>Zn(2+)</name>
        <dbReference type="ChEBI" id="CHEBI:29105"/>
        <label>2</label>
    </ligand>
</feature>
<feature type="binding site" evidence="4">
    <location>
        <position position="518"/>
    </location>
    <ligand>
        <name>Zn(2+)</name>
        <dbReference type="ChEBI" id="CHEBI:29105"/>
        <label>1</label>
    </ligand>
</feature>
<feature type="binding site" evidence="4">
    <location>
        <position position="522"/>
    </location>
    <ligand>
        <name>Zn(2+)</name>
        <dbReference type="ChEBI" id="CHEBI:29105"/>
        <label>1</label>
    </ligand>
</feature>
<feature type="binding site" evidence="4">
    <location>
        <position position="530"/>
    </location>
    <ligand>
        <name>Zn(2+)</name>
        <dbReference type="ChEBI" id="CHEBI:29105"/>
        <label>2</label>
    </ligand>
</feature>
<feature type="binding site" evidence="4">
    <location>
        <position position="534"/>
    </location>
    <ligand>
        <name>Zn(2+)</name>
        <dbReference type="ChEBI" id="CHEBI:29105"/>
        <label>2</label>
    </ligand>
</feature>
<feature type="modified residue" description="Phosphoserine" evidence="1">
    <location>
        <position position="24"/>
    </location>
</feature>
<feature type="modified residue" description="Phosphoserine" evidence="1">
    <location>
        <position position="255"/>
    </location>
</feature>
<feature type="modified residue" description="Phosphoserine" evidence="1">
    <location>
        <position position="400"/>
    </location>
</feature>
<feature type="modified residue" description="Phosphoserine" evidence="1">
    <location>
        <position position="567"/>
    </location>
</feature>
<feature type="cross-link" description="Glycyl lysine isopeptide (Lys-Gly) (interchain with G-Cter in SUMO2)" evidence="1">
    <location>
        <position position="29"/>
    </location>
</feature>
<feature type="cross-link" description="Glycyl lysine isopeptide (Lys-Gly) (interchain with G-Cter in SUMO2)" evidence="1">
    <location>
        <position position="440"/>
    </location>
</feature>
<feature type="splice variant" id="VSP_030517" description="In isoform 2." evidence="15">
    <location>
        <begin position="1"/>
        <end position="20"/>
    </location>
</feature>
<feature type="mutagenesis site" description="Disrupts interaction with PRDM14." evidence="13">
    <original>R</original>
    <variation>D</variation>
    <location>
        <position position="105"/>
    </location>
</feature>
<feature type="mutagenesis site" description="Disrupts interaction with PRDM14." evidence="13">
    <original>K</original>
    <variation>E</variation>
    <location>
        <position position="109"/>
    </location>
</feature>
<feature type="mutagenesis site" description="Reduces PRDM14 and OCT14 occupancy on target sites, no effect on interaction with PRDM14, predicted to impair homooligomerization; when associated with R-342; R-345; E-346; E-360; R-363 and R-374." evidence="14">
    <original>L</original>
    <variation>E</variation>
    <location>
        <position position="330"/>
    </location>
</feature>
<feature type="mutagenesis site" description="Reduces PRDM14 and OCT14 occupancy on target sites, no effect on interaction with PRDM14, predicted to impair homooligomerization; when associated with R-330; R-345; E-346; E-360; R-363 and R-374." evidence="14">
    <original>L</original>
    <variation>R</variation>
    <location>
        <position position="342"/>
    </location>
</feature>
<feature type="mutagenesis site" description="Reduces PRDM14 and OCT14 occupancy on target sites, no effect on interaction with PRDM14, predicted to impair homooligomerization; when associated with R-330; R-342; E-346; E-360; R-363 and R-374." evidence="14">
    <original>A</original>
    <variation>R</variation>
    <location>
        <position position="345"/>
    </location>
</feature>
<feature type="mutagenesis site" description="Reduces PRDM14 and OCT14 occupancy on target sites, no effect on interaction with PRDM14, predicted to impair homooligomerization; when associated with R-330; R-342; R-345; R-363 and R-374." evidence="14">
    <original>L</original>
    <variation>E</variation>
    <location>
        <position position="346"/>
    </location>
</feature>
<feature type="mutagenesis site" description="Reduces PRDM14 and OCT14 occupancy on target sites, no effect on interaction with PRDM14, predicted to impair homooligomerization; when associated with R-330; R-342; R-345; E-346; E-360; R-363 and R-374." evidence="14">
    <original>M</original>
    <variation>E</variation>
    <location>
        <position position="360"/>
    </location>
</feature>
<feature type="mutagenesis site" description="Reduces PRDM14 and OCT14 occupancy on target sites, no effect on interaction with PRDM14, predicted to impair homooligomerization; when associated with R-330; R-342; R-345; E-346; E-360 and R-374." evidence="14">
    <original>L</original>
    <variation>R</variation>
    <location>
        <position position="363"/>
    </location>
</feature>
<feature type="mutagenesis site" description="Reduces PRDM14 and OCT14 occupancy on target sites, no effect on interaction with PRDM14, predicted to impair homooligomerization; when associated with R-330; R-342; R-345; E-346; E-360 and R-363." evidence="14">
    <original>L</original>
    <variation>R</variation>
    <location>
        <position position="374"/>
    </location>
</feature>
<feature type="sequence conflict" description="In Ref. 1; BAC30586, 2; ABB02690 and 3; CAM13556." evidence="16" ref="1 2 3">
    <location>
        <position position="413"/>
    </location>
</feature>
<feature type="helix" evidence="17">
    <location>
        <begin position="106"/>
        <end position="124"/>
    </location>
</feature>
<feature type="helix" evidence="17">
    <location>
        <begin position="126"/>
        <end position="140"/>
    </location>
</feature>
<feature type="helix" evidence="17">
    <location>
        <begin position="146"/>
        <end position="157"/>
    </location>
</feature>
<feature type="helix" evidence="17">
    <location>
        <begin position="165"/>
        <end position="181"/>
    </location>
</feature>
<accession>O70374</accession>
<accession>B2RRH8</accession>
<accession>Q30BK8</accession>
<accession>Q6P288</accession>
<evidence type="ECO:0000250" key="1">
    <source>
        <dbReference type="UniProtKB" id="O43439"/>
    </source>
</evidence>
<evidence type="ECO:0000250" key="2">
    <source>
        <dbReference type="UniProtKB" id="Q06455"/>
    </source>
</evidence>
<evidence type="ECO:0000255" key="3"/>
<evidence type="ECO:0000255" key="4">
    <source>
        <dbReference type="PROSITE-ProRule" id="PRU00134"/>
    </source>
</evidence>
<evidence type="ECO:0000255" key="5">
    <source>
        <dbReference type="PROSITE-ProRule" id="PRU00440"/>
    </source>
</evidence>
<evidence type="ECO:0000256" key="6">
    <source>
        <dbReference type="SAM" id="MobiDB-lite"/>
    </source>
</evidence>
<evidence type="ECO:0000269" key="7">
    <source>
    </source>
</evidence>
<evidence type="ECO:0000269" key="8">
    <source>
    </source>
</evidence>
<evidence type="ECO:0000269" key="9">
    <source>
    </source>
</evidence>
<evidence type="ECO:0000269" key="10">
    <source>
    </source>
</evidence>
<evidence type="ECO:0000269" key="11">
    <source>
    </source>
</evidence>
<evidence type="ECO:0000269" key="12">
    <source>
    </source>
</evidence>
<evidence type="ECO:0000269" key="13">
    <source>
    </source>
</evidence>
<evidence type="ECO:0000269" key="14">
    <source>
    </source>
</evidence>
<evidence type="ECO:0000303" key="15">
    <source>
    </source>
</evidence>
<evidence type="ECO:0000305" key="16"/>
<evidence type="ECO:0007829" key="17">
    <source>
        <dbReference type="PDB" id="5ECJ"/>
    </source>
</evidence>
<gene>
    <name type="primary">Cbfa2t2</name>
    <name type="synonym">Cbfa2t2h</name>
    <name type="synonym">Mtgr1</name>
</gene>
<organism>
    <name type="scientific">Mus musculus</name>
    <name type="common">Mouse</name>
    <dbReference type="NCBI Taxonomy" id="10090"/>
    <lineage>
        <taxon>Eukaryota</taxon>
        <taxon>Metazoa</taxon>
        <taxon>Chordata</taxon>
        <taxon>Craniata</taxon>
        <taxon>Vertebrata</taxon>
        <taxon>Euteleostomi</taxon>
        <taxon>Mammalia</taxon>
        <taxon>Eutheria</taxon>
        <taxon>Euarchontoglires</taxon>
        <taxon>Glires</taxon>
        <taxon>Rodentia</taxon>
        <taxon>Myomorpha</taxon>
        <taxon>Muroidea</taxon>
        <taxon>Muridae</taxon>
        <taxon>Murinae</taxon>
        <taxon>Mus</taxon>
        <taxon>Mus</taxon>
    </lineage>
</organism>
<proteinExistence type="evidence at protein level"/>
<comment type="function">
    <text evidence="1 7 12 14">Transcriptional corepressor which facilitates transcriptional repression via its association with DNA-binding transcription factors and recruitment of other corepressors and histone-modifying enzymes. Via association with PRDM14 is involved in regulation of embryonic stem cell (ESC) pluripotency. Involved in primordial germ cell (PCG) formation (PubMed:27281218). Stabilizes PRDM14 and OCT4 on chromatin in a homooligomerization-dependent mannerCan repress the expression of MMP7 in a ZBTB33-dependent manner (By similarity). Through heteromerization with CBFA2T3/MTG16 may be involved in regulation of the proliferation and the differentiation of erythroid progenitors by repressing the expression of TAL1 target genes (PubMed:19799863). Required for the maintenance of the secretory cell lineage in the small intestine (PubMed:16227606). Can inhibit Notch signaling probably by association with RBPJ and may be involved in GFI1-mediated Paneth cell differentiation (PubMed:25398765).</text>
</comment>
<comment type="subunit">
    <text evidence="1 8 10 12 14">Homooligomer. Homotetramerization is mediated by the NHR2 domain. Interacts with CBFA2T3/MTG16 (PubMed:19799863). Can interact with RUNX1T1/CBFA2T1. Heterotetramerization between members of the CBFA2T family is proposed (By similarity). Interacts with RBP, GFI1, TCF4, PRDM14 (PubMed:18039847, PubMed:25398765, PubMed:27281218). Interacts with TAL1 and CBFA2T3/MTG16; the heteromer with CBFA2T3/MTG16 may function in repression of TAL1 (PubMed:19799863).</text>
</comment>
<comment type="interaction">
    <interactant intactId="EBI-8006755">
        <id>O70374</id>
    </interactant>
    <interactant intactId="EBI-8006437">
        <id>P22091</id>
        <label>Tal1</label>
    </interactant>
    <organismsDiffer>false</organismsDiffer>
    <experiments>8</experiments>
</comment>
<comment type="subcellular location">
    <subcellularLocation>
        <location evidence="5">Nucleus</location>
    </subcellularLocation>
</comment>
<comment type="alternative products">
    <event type="alternative splicing"/>
    <isoform>
        <id>O70374-1</id>
        <name>1</name>
        <sequence type="displayed"/>
    </isoform>
    <isoform>
        <id>O70374-2</id>
        <name>2</name>
        <sequence type="described" ref="VSP_030517"/>
    </isoform>
</comment>
<comment type="tissue specificity">
    <text evidence="13">Expressed in embryonic stem cells.</text>
</comment>
<comment type="developmental stage">
    <text evidence="9">First expression detected on embryonic day 11.5.</text>
</comment>
<comment type="domain">
    <text evidence="2">Nervy homology region 2 (NHR2) mediates homo- and possibly heterotypic oligomerization by forming a four-helix bundle tetrameric structure.</text>
</comment>
<comment type="disease">
    <text evidence="11">Required for tumorigenesis in a AOM/DSS colitis-associated carcinoma model. May be involved in intestinal tumorigenesis.</text>
</comment>
<comment type="miscellaneous">
    <text>Loss of Mtgr1 impairs the maturation of secretory cells in the small intestine.</text>
</comment>
<comment type="similarity">
    <text evidence="16">Belongs to the CBFA2T family.</text>
</comment>
<sequence>MVGVPGAAAFQLGCEKRVPAMPGSPVEVKIQSRSSPPIMPPLPPINPGGPRPVSFTPTALSNGINHSPPTLNGAPSPPQRFSNGPASSTSSALTNQQLPATCGARQLSKLKRFLTTLQQFGNDISPEIGEKVRTLVLALVNSTVTIEEFHCKLQEATNFPLRPFVIPFLKANLPLLQRELLHCARAAKQTPSQYLAQHEHLLLNTSIASPADSSELLMEVHGNGKRPSPERRDENNFERDTVPPEPPAKRVCTISPAPRHSPALTVPLMNPGGQFHPTPPPLQHYTLEDIATSHLYREPNKMLEHREVRERHHNLSLNGGYQDELVDHRLTEREWADEWKHLDHALNCIMEMVEKTRRSMAVLRRCQESDREELNYWKRRFNENTELRKTGTELVSRQHSPGSTDSLSNDSQREFTSRPATGYVPVEFWKKTEEAVNKVKIQAMSEVQKAVAEAEQKAFEVIATERARMEQTIADVKRQAAEDAFLVINEQEESTENCWNCGRKASETCSGCNIARYCGSFCQHKDWERHHRLCGQSLHGHSPHSQSRPLLPGGRGSARSADCSVPSPALDKTSATTSRSSTPASVTAIDANGL</sequence>
<reference key="1">
    <citation type="journal article" date="2005" name="Science">
        <title>The transcriptional landscape of the mammalian genome.</title>
        <authorList>
            <person name="Carninci P."/>
            <person name="Kasukawa T."/>
            <person name="Katayama S."/>
            <person name="Gough J."/>
            <person name="Frith M.C."/>
            <person name="Maeda N."/>
            <person name="Oyama R."/>
            <person name="Ravasi T."/>
            <person name="Lenhard B."/>
            <person name="Wells C."/>
            <person name="Kodzius R."/>
            <person name="Shimokawa K."/>
            <person name="Bajic V.B."/>
            <person name="Brenner S.E."/>
            <person name="Batalov S."/>
            <person name="Forrest A.R."/>
            <person name="Zavolan M."/>
            <person name="Davis M.J."/>
            <person name="Wilming L.G."/>
            <person name="Aidinis V."/>
            <person name="Allen J.E."/>
            <person name="Ambesi-Impiombato A."/>
            <person name="Apweiler R."/>
            <person name="Aturaliya R.N."/>
            <person name="Bailey T.L."/>
            <person name="Bansal M."/>
            <person name="Baxter L."/>
            <person name="Beisel K.W."/>
            <person name="Bersano T."/>
            <person name="Bono H."/>
            <person name="Chalk A.M."/>
            <person name="Chiu K.P."/>
            <person name="Choudhary V."/>
            <person name="Christoffels A."/>
            <person name="Clutterbuck D.R."/>
            <person name="Crowe M.L."/>
            <person name="Dalla E."/>
            <person name="Dalrymple B.P."/>
            <person name="de Bono B."/>
            <person name="Della Gatta G."/>
            <person name="di Bernardo D."/>
            <person name="Down T."/>
            <person name="Engstrom P."/>
            <person name="Fagiolini M."/>
            <person name="Faulkner G."/>
            <person name="Fletcher C.F."/>
            <person name="Fukushima T."/>
            <person name="Furuno M."/>
            <person name="Futaki S."/>
            <person name="Gariboldi M."/>
            <person name="Georgii-Hemming P."/>
            <person name="Gingeras T.R."/>
            <person name="Gojobori T."/>
            <person name="Green R.E."/>
            <person name="Gustincich S."/>
            <person name="Harbers M."/>
            <person name="Hayashi Y."/>
            <person name="Hensch T.K."/>
            <person name="Hirokawa N."/>
            <person name="Hill D."/>
            <person name="Huminiecki L."/>
            <person name="Iacono M."/>
            <person name="Ikeo K."/>
            <person name="Iwama A."/>
            <person name="Ishikawa T."/>
            <person name="Jakt M."/>
            <person name="Kanapin A."/>
            <person name="Katoh M."/>
            <person name="Kawasawa Y."/>
            <person name="Kelso J."/>
            <person name="Kitamura H."/>
            <person name="Kitano H."/>
            <person name="Kollias G."/>
            <person name="Krishnan S.P."/>
            <person name="Kruger A."/>
            <person name="Kummerfeld S.K."/>
            <person name="Kurochkin I.V."/>
            <person name="Lareau L.F."/>
            <person name="Lazarevic D."/>
            <person name="Lipovich L."/>
            <person name="Liu J."/>
            <person name="Liuni S."/>
            <person name="McWilliam S."/>
            <person name="Madan Babu M."/>
            <person name="Madera M."/>
            <person name="Marchionni L."/>
            <person name="Matsuda H."/>
            <person name="Matsuzawa S."/>
            <person name="Miki H."/>
            <person name="Mignone F."/>
            <person name="Miyake S."/>
            <person name="Morris K."/>
            <person name="Mottagui-Tabar S."/>
            <person name="Mulder N."/>
            <person name="Nakano N."/>
            <person name="Nakauchi H."/>
            <person name="Ng P."/>
            <person name="Nilsson R."/>
            <person name="Nishiguchi S."/>
            <person name="Nishikawa S."/>
            <person name="Nori F."/>
            <person name="Ohara O."/>
            <person name="Okazaki Y."/>
            <person name="Orlando V."/>
            <person name="Pang K.C."/>
            <person name="Pavan W.J."/>
            <person name="Pavesi G."/>
            <person name="Pesole G."/>
            <person name="Petrovsky N."/>
            <person name="Piazza S."/>
            <person name="Reed J."/>
            <person name="Reid J.F."/>
            <person name="Ring B.Z."/>
            <person name="Ringwald M."/>
            <person name="Rost B."/>
            <person name="Ruan Y."/>
            <person name="Salzberg S.L."/>
            <person name="Sandelin A."/>
            <person name="Schneider C."/>
            <person name="Schoenbach C."/>
            <person name="Sekiguchi K."/>
            <person name="Semple C.A."/>
            <person name="Seno S."/>
            <person name="Sessa L."/>
            <person name="Sheng Y."/>
            <person name="Shibata Y."/>
            <person name="Shimada H."/>
            <person name="Shimada K."/>
            <person name="Silva D."/>
            <person name="Sinclair B."/>
            <person name="Sperling S."/>
            <person name="Stupka E."/>
            <person name="Sugiura K."/>
            <person name="Sultana R."/>
            <person name="Takenaka Y."/>
            <person name="Taki K."/>
            <person name="Tammoja K."/>
            <person name="Tan S.L."/>
            <person name="Tang S."/>
            <person name="Taylor M.S."/>
            <person name="Tegner J."/>
            <person name="Teichmann S.A."/>
            <person name="Ueda H.R."/>
            <person name="van Nimwegen E."/>
            <person name="Verardo R."/>
            <person name="Wei C.L."/>
            <person name="Yagi K."/>
            <person name="Yamanishi H."/>
            <person name="Zabarovsky E."/>
            <person name="Zhu S."/>
            <person name="Zimmer A."/>
            <person name="Hide W."/>
            <person name="Bult C."/>
            <person name="Grimmond S.M."/>
            <person name="Teasdale R.D."/>
            <person name="Liu E.T."/>
            <person name="Brusic V."/>
            <person name="Quackenbush J."/>
            <person name="Wahlestedt C."/>
            <person name="Mattick J.S."/>
            <person name="Hume D.A."/>
            <person name="Kai C."/>
            <person name="Sasaki D."/>
            <person name="Tomaru Y."/>
            <person name="Fukuda S."/>
            <person name="Kanamori-Katayama M."/>
            <person name="Suzuki M."/>
            <person name="Aoki J."/>
            <person name="Arakawa T."/>
            <person name="Iida J."/>
            <person name="Imamura K."/>
            <person name="Itoh M."/>
            <person name="Kato T."/>
            <person name="Kawaji H."/>
            <person name="Kawagashira N."/>
            <person name="Kawashima T."/>
            <person name="Kojima M."/>
            <person name="Kondo S."/>
            <person name="Konno H."/>
            <person name="Nakano K."/>
            <person name="Ninomiya N."/>
            <person name="Nishio T."/>
            <person name="Okada M."/>
            <person name="Plessy C."/>
            <person name="Shibata K."/>
            <person name="Shiraki T."/>
            <person name="Suzuki S."/>
            <person name="Tagami M."/>
            <person name="Waki K."/>
            <person name="Watahiki A."/>
            <person name="Okamura-Oho Y."/>
            <person name="Suzuki H."/>
            <person name="Kawai J."/>
            <person name="Hayashizaki Y."/>
        </authorList>
    </citation>
    <scope>NUCLEOTIDE SEQUENCE [LARGE SCALE MRNA] (ISOFORMS 1 AND 2)</scope>
    <source>
        <strain>C57BL/6J</strain>
    </source>
</reference>
<reference key="2">
    <citation type="journal article" date="2005" name="Mol. Cell. Biol.">
        <title>Mtgr1 is a transcriptional corepressor that is required for maintenance of the secretory cell lineage in the small intestine.</title>
        <authorList>
            <person name="Amann J.M."/>
            <person name="Chyla B.J."/>
            <person name="Ellis T.C."/>
            <person name="Martinez A."/>
            <person name="Moore A.C."/>
            <person name="Franklin J.L."/>
            <person name="McGhee L."/>
            <person name="Meyers S."/>
            <person name="Ohm J.E."/>
            <person name="Luce K.S."/>
            <person name="Ouelette A.J."/>
            <person name="Washington M.K."/>
            <person name="Thompson M.A."/>
            <person name="King D."/>
            <person name="Gautam S."/>
            <person name="Coffey R.J."/>
            <person name="Whitehead R.H."/>
            <person name="Hiebert S.W."/>
        </authorList>
    </citation>
    <scope>NUCLEOTIDE SEQUENCE [MRNA] (ISOFORM 1)</scope>
    <scope>FUNCTION</scope>
    <source>
        <strain>C57BL/6 X DBA/2</strain>
    </source>
</reference>
<reference key="3">
    <citation type="journal article" date="2009" name="PLoS Biol.">
        <title>Lineage-specific biology revealed by a finished genome assembly of the mouse.</title>
        <authorList>
            <person name="Church D.M."/>
            <person name="Goodstadt L."/>
            <person name="Hillier L.W."/>
            <person name="Zody M.C."/>
            <person name="Goldstein S."/>
            <person name="She X."/>
            <person name="Bult C.J."/>
            <person name="Agarwala R."/>
            <person name="Cherry J.L."/>
            <person name="DiCuccio M."/>
            <person name="Hlavina W."/>
            <person name="Kapustin Y."/>
            <person name="Meric P."/>
            <person name="Maglott D."/>
            <person name="Birtle Z."/>
            <person name="Marques A.C."/>
            <person name="Graves T."/>
            <person name="Zhou S."/>
            <person name="Teague B."/>
            <person name="Potamousis K."/>
            <person name="Churas C."/>
            <person name="Place M."/>
            <person name="Herschleb J."/>
            <person name="Runnheim R."/>
            <person name="Forrest D."/>
            <person name="Amos-Landgraf J."/>
            <person name="Schwartz D.C."/>
            <person name="Cheng Z."/>
            <person name="Lindblad-Toh K."/>
            <person name="Eichler E.E."/>
            <person name="Ponting C.P."/>
        </authorList>
    </citation>
    <scope>NUCLEOTIDE SEQUENCE [LARGE SCALE GENOMIC DNA]</scope>
    <source>
        <strain>C57BL/6J</strain>
    </source>
</reference>
<reference key="4">
    <citation type="journal article" date="2004" name="Genome Res.">
        <title>The status, quality, and expansion of the NIH full-length cDNA project: the Mammalian Gene Collection (MGC).</title>
        <authorList>
            <consortium name="The MGC Project Team"/>
        </authorList>
    </citation>
    <scope>NUCLEOTIDE SEQUENCE [LARGE SCALE MRNA] (ISOFORM 1)</scope>
    <source>
        <strain>C57BL/6J</strain>
        <tissue>Brain</tissue>
    </source>
</reference>
<reference key="5">
    <citation type="journal article" date="1998" name="Genomics">
        <title>CBFA2T1, a gene rearranged in human leukemia, is a member of a multigene family.</title>
        <authorList>
            <person name="Calabi F."/>
            <person name="Cilli V."/>
        </authorList>
    </citation>
    <scope>NUCLEOTIDE SEQUENCE [GENOMIC DNA] OF 61-140</scope>
    <source>
        <strain>129</strain>
    </source>
</reference>
<reference key="6">
    <citation type="submission" date="2009-01" db="UniProtKB">
        <authorList>
            <person name="Lubec G."/>
            <person name="Sunyer B."/>
            <person name="Chen W.-Q."/>
        </authorList>
    </citation>
    <scope>PROTEIN SEQUENCE OF 469-477</scope>
    <scope>IDENTIFICATION BY MASS SPECTROMETRY</scope>
    <source>
        <strain>OF1</strain>
        <tissue>Hippocampus</tissue>
    </source>
</reference>
<reference key="7">
    <citation type="journal article" date="2008" name="Mol. Cell. Biol.">
        <title>Myeloid translocation gene family members associate with T-cell factors (TCFs) and influence TCF-dependent transcription.</title>
        <authorList>
            <person name="Moore A.C."/>
            <person name="Amann J.M."/>
            <person name="Williams C.S."/>
            <person name="Tahinci E."/>
            <person name="Farmer T.E."/>
            <person name="Martinez J.A."/>
            <person name="Yang G."/>
            <person name="Luce K.S."/>
            <person name="Lee E."/>
            <person name="Hiebert S.W."/>
        </authorList>
    </citation>
    <scope>INTERACTION WITH TCF4</scope>
</reference>
<reference key="8">
    <citation type="journal article" date="2009" name="Biochem. Biophys. Res. Commun.">
        <title>Eto2/MTG16 and MTGR1 are heteromeric corepressors of the TAL1/SCL transcription factor in murine erythroid progenitors.</title>
        <authorList>
            <person name="Cai Y."/>
            <person name="Xu Z."/>
            <person name="Xie J."/>
            <person name="Ham A.J."/>
            <person name="Koury M.J."/>
            <person name="Hiebert S.W."/>
            <person name="Brandt S.J."/>
        </authorList>
    </citation>
    <scope>FUNCTION</scope>
    <scope>INTERACTION WITH CBFA2T3 AND TAL1</scope>
</reference>
<reference key="9">
    <citation type="journal article" date="2009" name="Dev. Dyn.">
        <title>Regional expression of MTG genes in the developing mouse central nervous system.</title>
        <authorList>
            <person name="Alishahi A."/>
            <person name="Koyano-Nakagawa N."/>
            <person name="Nakagawa Y."/>
        </authorList>
    </citation>
    <scope>DEVELOPMENTAL STAGE</scope>
</reference>
<reference key="10">
    <citation type="journal article" date="2011" name="Cancer Res.">
        <title>MTGR1 is required for tumorigenesis in the murine AOM/DSS colitis-associated carcinoma model.</title>
        <authorList>
            <person name="Barrett C.W."/>
            <person name="Fingleton B."/>
            <person name="Williams A."/>
            <person name="Ning W."/>
            <person name="Fischer M.A."/>
            <person name="Washington M.K."/>
            <person name="Chaturvedi R."/>
            <person name="Wilson K.T."/>
            <person name="Hiebert S.W."/>
            <person name="Williams C.S."/>
        </authorList>
    </citation>
    <scope>POSSIBLE INVOLVEMENT IN INTESTINAL TUMORIGENESIS</scope>
</reference>
<reference key="11">
    <citation type="journal article" date="2015" name="FASEB J.">
        <title>The transcriptional corepressor MTGR1 regulates intestinal secretory lineage allocation.</title>
        <authorList>
            <person name="Parang B."/>
            <person name="Rosenblatt D."/>
            <person name="Williams A.D."/>
            <person name="Washington M.K."/>
            <person name="Revetta F."/>
            <person name="Short S.P."/>
            <person name="Reddy V.K."/>
            <person name="Hunt A."/>
            <person name="Shroyer N.F."/>
            <person name="Engel M.E."/>
            <person name="Hiebert S.W."/>
            <person name="Williams C.S."/>
        </authorList>
    </citation>
    <scope>FUNCTION</scope>
    <scope>INTERACTION WITH RBPJ AND GFI1</scope>
</reference>
<reference key="12">
    <citation type="journal article" date="2016" name="Nature">
        <title>Co-repressor CBFA2T2 regulates pluripotency and germline development.</title>
        <authorList>
            <person name="Tu S."/>
            <person name="Narendra V."/>
            <person name="Yamaji M."/>
            <person name="Vidal S.E."/>
            <person name="Rojas L.A."/>
            <person name="Wang X."/>
            <person name="Kim S.Y."/>
            <person name="Garcia B.A."/>
            <person name="Tuschl T."/>
            <person name="Stadtfeld M."/>
            <person name="Reinberg D."/>
        </authorList>
    </citation>
    <scope>FUNCTION</scope>
    <scope>INTERACTION WITH PRDM14</scope>
    <scope>MUTAGENESIS OF LEU-330; LEU-342; ALA-345; LEU-346; MET-360; LEU-363 AND LEU-374</scope>
</reference>
<reference key="13">
    <citation type="journal article" date="2015" name="Elife">
        <title>ETO family protein Mtgr1 mediates Prdm14 functions in stem cell maintenance and primordial germ cell formation.</title>
        <authorList>
            <person name="Nady N."/>
            <person name="Gupta A."/>
            <person name="Ma Z."/>
            <person name="Swigut T."/>
            <person name="Koide A."/>
            <person name="Koide S."/>
            <person name="Wysocka J."/>
        </authorList>
    </citation>
    <scope>X-RAY CRYSTALLOGRAPHY (3.05 ANGSTROMS) OF 98-206 IN COMPLEX WITH PRDM14</scope>
    <scope>FUNCTION</scope>
    <scope>MUTAGENESIS OF ARG-105 AND LYS-109</scope>
    <scope>TISSUE SPECIFICITY</scope>
</reference>
<keyword id="KW-0002">3D-structure</keyword>
<keyword id="KW-0025">Alternative splicing</keyword>
<keyword id="KW-0175">Coiled coil</keyword>
<keyword id="KW-0903">Direct protein sequencing</keyword>
<keyword id="KW-1017">Isopeptide bond</keyword>
<keyword id="KW-0479">Metal-binding</keyword>
<keyword id="KW-0539">Nucleus</keyword>
<keyword id="KW-0597">Phosphoprotein</keyword>
<keyword id="KW-1185">Reference proteome</keyword>
<keyword id="KW-0678">Repressor</keyword>
<keyword id="KW-0804">Transcription</keyword>
<keyword id="KW-0805">Transcription regulation</keyword>
<keyword id="KW-0832">Ubl conjugation</keyword>
<keyword id="KW-0862">Zinc</keyword>
<keyword id="KW-0863">Zinc-finger</keyword>
<dbReference type="EMBL" id="AK049206">
    <property type="protein sequence ID" value="BAC33609.1"/>
    <property type="molecule type" value="mRNA"/>
</dbReference>
<dbReference type="EMBL" id="AK040403">
    <property type="protein sequence ID" value="BAC30586.1"/>
    <property type="molecule type" value="mRNA"/>
</dbReference>
<dbReference type="EMBL" id="AK153602">
    <property type="protein sequence ID" value="BAE32114.1"/>
    <property type="molecule type" value="mRNA"/>
</dbReference>
<dbReference type="EMBL" id="DQ213025">
    <property type="protein sequence ID" value="ABB02690.1"/>
    <property type="molecule type" value="mRNA"/>
</dbReference>
<dbReference type="EMBL" id="AL772292">
    <property type="protein sequence ID" value="CAM13555.1"/>
    <property type="molecule type" value="Genomic_DNA"/>
</dbReference>
<dbReference type="EMBL" id="AL772292">
    <property type="protein sequence ID" value="CAM13556.1"/>
    <property type="molecule type" value="Genomic_DNA"/>
</dbReference>
<dbReference type="EMBL" id="BC064679">
    <property type="protein sequence ID" value="AAH64679.1"/>
    <property type="molecule type" value="mRNA"/>
</dbReference>
<dbReference type="EMBL" id="BC138410">
    <property type="protein sequence ID" value="AAI38411.1"/>
    <property type="molecule type" value="mRNA"/>
</dbReference>
<dbReference type="EMBL" id="BC145679">
    <property type="protein sequence ID" value="AAI45680.1"/>
    <property type="molecule type" value="mRNA"/>
</dbReference>
<dbReference type="EMBL" id="AF052219">
    <property type="protein sequence ID" value="AAC64697.1"/>
    <property type="molecule type" value="Genomic_DNA"/>
</dbReference>
<dbReference type="CCDS" id="CCDS16932.1">
    <molecule id="O70374-1"/>
</dbReference>
<dbReference type="RefSeq" id="NP_033953.1">
    <property type="nucleotide sequence ID" value="NM_009823.1"/>
</dbReference>
<dbReference type="RefSeq" id="NP_766448.1">
    <molecule id="O70374-1"/>
    <property type="nucleotide sequence ID" value="NM_172860.2"/>
</dbReference>
<dbReference type="RefSeq" id="XP_006498703.1">
    <molecule id="O70374-2"/>
    <property type="nucleotide sequence ID" value="XM_006498640.4"/>
</dbReference>
<dbReference type="PDB" id="5ECJ">
    <property type="method" value="X-ray"/>
    <property type="resolution" value="3.05 A"/>
    <property type="chains" value="A/B=98-206"/>
</dbReference>
<dbReference type="PDBsum" id="5ECJ"/>
<dbReference type="SMR" id="O70374"/>
<dbReference type="BioGRID" id="198521">
    <property type="interactions" value="1"/>
</dbReference>
<dbReference type="DIP" id="DIP-62032N"/>
<dbReference type="FunCoup" id="O70374">
    <property type="interactions" value="2683"/>
</dbReference>
<dbReference type="IntAct" id="O70374">
    <property type="interactions" value="2"/>
</dbReference>
<dbReference type="MINT" id="O70374"/>
<dbReference type="STRING" id="10090.ENSMUSP00000043087"/>
<dbReference type="GlyGen" id="O70374">
    <property type="glycosylation" value="1 site"/>
</dbReference>
<dbReference type="iPTMnet" id="O70374"/>
<dbReference type="PhosphoSitePlus" id="O70374"/>
<dbReference type="SwissPalm" id="O70374"/>
<dbReference type="jPOST" id="O70374"/>
<dbReference type="PaxDb" id="10090-ENSMUSP00000043087"/>
<dbReference type="PeptideAtlas" id="O70374"/>
<dbReference type="ProteomicsDB" id="291450">
    <molecule id="O70374-1"/>
</dbReference>
<dbReference type="ProteomicsDB" id="291451">
    <molecule id="O70374-2"/>
</dbReference>
<dbReference type="Antibodypedia" id="10684">
    <property type="antibodies" value="297 antibodies from 33 providers"/>
</dbReference>
<dbReference type="DNASU" id="12396"/>
<dbReference type="Ensembl" id="ENSMUST00000045270.15">
    <molecule id="O70374-1"/>
    <property type="protein sequence ID" value="ENSMUSP00000043087.9"/>
    <property type="gene ID" value="ENSMUSG00000038533.16"/>
</dbReference>
<dbReference type="GeneID" id="12396"/>
<dbReference type="KEGG" id="mmu:12396"/>
<dbReference type="UCSC" id="uc008njf.2">
    <molecule id="O70374-1"/>
    <property type="organism name" value="mouse"/>
</dbReference>
<dbReference type="AGR" id="MGI:1333833"/>
<dbReference type="CTD" id="9139"/>
<dbReference type="MGI" id="MGI:1333833">
    <property type="gene designation" value="Cbfa2t2"/>
</dbReference>
<dbReference type="VEuPathDB" id="HostDB:ENSMUSG00000038533"/>
<dbReference type="eggNOG" id="ENOG502QTD6">
    <property type="taxonomic scope" value="Eukaryota"/>
</dbReference>
<dbReference type="GeneTree" id="ENSGT00950000183176"/>
<dbReference type="HOGENOM" id="CLU_022077_2_0_1"/>
<dbReference type="InParanoid" id="O70374"/>
<dbReference type="OMA" id="WKHLDHX"/>
<dbReference type="OrthoDB" id="8872930at2759"/>
<dbReference type="PhylomeDB" id="O70374"/>
<dbReference type="TreeFam" id="TF106303"/>
<dbReference type="BioGRID-ORCS" id="12396">
    <property type="hits" value="4 hits in 77 CRISPR screens"/>
</dbReference>
<dbReference type="ChiTaRS" id="Cbfa2t2">
    <property type="organism name" value="mouse"/>
</dbReference>
<dbReference type="EvolutionaryTrace" id="O70374"/>
<dbReference type="PRO" id="PR:O70374"/>
<dbReference type="Proteomes" id="UP000000589">
    <property type="component" value="Chromosome 2"/>
</dbReference>
<dbReference type="RNAct" id="O70374">
    <property type="molecule type" value="protein"/>
</dbReference>
<dbReference type="Bgee" id="ENSMUSG00000038533">
    <property type="expression patterns" value="Expressed in substantia nigra and 282 other cell types or tissues"/>
</dbReference>
<dbReference type="ExpressionAtlas" id="O70374">
    <property type="expression patterns" value="baseline and differential"/>
</dbReference>
<dbReference type="GO" id="GO:0005634">
    <property type="term" value="C:nucleus"/>
    <property type="evidence" value="ECO:0007669"/>
    <property type="project" value="UniProtKB-SubCell"/>
</dbReference>
<dbReference type="GO" id="GO:0003714">
    <property type="term" value="F:transcription corepressor activity"/>
    <property type="evidence" value="ECO:0000314"/>
    <property type="project" value="MGI"/>
</dbReference>
<dbReference type="GO" id="GO:0008270">
    <property type="term" value="F:zinc ion binding"/>
    <property type="evidence" value="ECO:0007669"/>
    <property type="project" value="UniProtKB-KW"/>
</dbReference>
<dbReference type="GO" id="GO:0006351">
    <property type="term" value="P:DNA-templated transcription"/>
    <property type="evidence" value="ECO:0007669"/>
    <property type="project" value="InterPro"/>
</dbReference>
<dbReference type="GO" id="GO:0030855">
    <property type="term" value="P:epithelial cell differentiation"/>
    <property type="evidence" value="ECO:0000315"/>
    <property type="project" value="MGI"/>
</dbReference>
<dbReference type="GO" id="GO:0060575">
    <property type="term" value="P:intestinal epithelial cell differentiation"/>
    <property type="evidence" value="ECO:0000315"/>
    <property type="project" value="UniProtKB"/>
</dbReference>
<dbReference type="GO" id="GO:0045892">
    <property type="term" value="P:negative regulation of DNA-templated transcription"/>
    <property type="evidence" value="ECO:0000314"/>
    <property type="project" value="MGI"/>
</dbReference>
<dbReference type="GO" id="GO:0010977">
    <property type="term" value="P:negative regulation of neuron projection development"/>
    <property type="evidence" value="ECO:0000250"/>
    <property type="project" value="UniProtKB"/>
</dbReference>
<dbReference type="GO" id="GO:0045746">
    <property type="term" value="P:negative regulation of Notch signaling pathway"/>
    <property type="evidence" value="ECO:0000315"/>
    <property type="project" value="UniProtKB"/>
</dbReference>
<dbReference type="GO" id="GO:0000122">
    <property type="term" value="P:negative regulation of transcription by RNA polymerase II"/>
    <property type="evidence" value="ECO:0000316"/>
    <property type="project" value="MGI"/>
</dbReference>
<dbReference type="GO" id="GO:0010976">
    <property type="term" value="P:positive regulation of neuron projection development"/>
    <property type="evidence" value="ECO:0007669"/>
    <property type="project" value="Ensembl"/>
</dbReference>
<dbReference type="FunFam" id="6.10.140.2220:FF:000001">
    <property type="entry name" value="CBFA2/RUNX1 translocation partner 3"/>
    <property type="match status" value="1"/>
</dbReference>
<dbReference type="FunFam" id="1.20.120.1110:FF:000001">
    <property type="entry name" value="RUNX1 translocation partner 1"/>
    <property type="match status" value="1"/>
</dbReference>
<dbReference type="Gene3D" id="6.10.140.2220">
    <property type="match status" value="1"/>
</dbReference>
<dbReference type="Gene3D" id="6.10.250.230">
    <property type="match status" value="1"/>
</dbReference>
<dbReference type="Gene3D" id="1.20.120.1110">
    <property type="entry name" value="TAFH/NHR1 domain"/>
    <property type="match status" value="1"/>
</dbReference>
<dbReference type="InterPro" id="IPR013289">
    <property type="entry name" value="CBFA2T1/2/3"/>
</dbReference>
<dbReference type="InterPro" id="IPR013291">
    <property type="entry name" value="MTGR1"/>
</dbReference>
<dbReference type="InterPro" id="IPR014896">
    <property type="entry name" value="NHR2"/>
</dbReference>
<dbReference type="InterPro" id="IPR037249">
    <property type="entry name" value="TAFH/NHR1_dom_sf"/>
</dbReference>
<dbReference type="InterPro" id="IPR003894">
    <property type="entry name" value="TAFH_NHR1"/>
</dbReference>
<dbReference type="InterPro" id="IPR002893">
    <property type="entry name" value="Znf_MYND"/>
</dbReference>
<dbReference type="PANTHER" id="PTHR10379">
    <property type="entry name" value="MTG8 ETO EIGHT TWENTY ONE PROTEIN"/>
    <property type="match status" value="1"/>
</dbReference>
<dbReference type="PANTHER" id="PTHR10379:SF13">
    <property type="entry name" value="PROTEIN CBFA2T2"/>
    <property type="match status" value="1"/>
</dbReference>
<dbReference type="Pfam" id="PF08788">
    <property type="entry name" value="NHR2"/>
    <property type="match status" value="1"/>
</dbReference>
<dbReference type="Pfam" id="PF07531">
    <property type="entry name" value="TAFH"/>
    <property type="match status" value="1"/>
</dbReference>
<dbReference type="Pfam" id="PF01753">
    <property type="entry name" value="zf-MYND"/>
    <property type="match status" value="1"/>
</dbReference>
<dbReference type="PRINTS" id="PR01875">
    <property type="entry name" value="ETOFAMILY"/>
</dbReference>
<dbReference type="PRINTS" id="PR01877">
    <property type="entry name" value="MTGR1PROTEIN"/>
</dbReference>
<dbReference type="SMART" id="SM00549">
    <property type="entry name" value="TAFH"/>
    <property type="match status" value="1"/>
</dbReference>
<dbReference type="SUPFAM" id="SSF144232">
    <property type="entry name" value="HIT/MYND zinc finger-like"/>
    <property type="match status" value="1"/>
</dbReference>
<dbReference type="SUPFAM" id="SSF158553">
    <property type="entry name" value="TAFH domain-like"/>
    <property type="match status" value="1"/>
</dbReference>
<dbReference type="PROSITE" id="PS51119">
    <property type="entry name" value="TAFH"/>
    <property type="match status" value="1"/>
</dbReference>
<dbReference type="PROSITE" id="PS01360">
    <property type="entry name" value="ZF_MYND_1"/>
    <property type="match status" value="1"/>
</dbReference>
<dbReference type="PROSITE" id="PS50865">
    <property type="entry name" value="ZF_MYND_2"/>
    <property type="match status" value="1"/>
</dbReference>